<gene>
    <name evidence="1" type="primary">rplD</name>
    <name type="ordered locus">ECUMN_3792</name>
</gene>
<keyword id="KW-0687">Ribonucleoprotein</keyword>
<keyword id="KW-0689">Ribosomal protein</keyword>
<keyword id="KW-0694">RNA-binding</keyword>
<keyword id="KW-0699">rRNA-binding</keyword>
<accession>B7NDU0</accession>
<organism>
    <name type="scientific">Escherichia coli O17:K52:H18 (strain UMN026 / ExPEC)</name>
    <dbReference type="NCBI Taxonomy" id="585056"/>
    <lineage>
        <taxon>Bacteria</taxon>
        <taxon>Pseudomonadati</taxon>
        <taxon>Pseudomonadota</taxon>
        <taxon>Gammaproteobacteria</taxon>
        <taxon>Enterobacterales</taxon>
        <taxon>Enterobacteriaceae</taxon>
        <taxon>Escherichia</taxon>
    </lineage>
</organism>
<name>RL4_ECOLU</name>
<proteinExistence type="inferred from homology"/>
<comment type="function">
    <text evidence="1">One of the primary rRNA binding proteins, this protein initially binds near the 5'-end of the 23S rRNA. It is important during the early stages of 50S assembly. It makes multiple contacts with different domains of the 23S rRNA in the assembled 50S subunit and ribosome.</text>
</comment>
<comment type="function">
    <text evidence="1">Forms part of the polypeptide exit tunnel.</text>
</comment>
<comment type="subunit">
    <text evidence="1">Part of the 50S ribosomal subunit.</text>
</comment>
<comment type="similarity">
    <text evidence="1">Belongs to the universal ribosomal protein uL4 family.</text>
</comment>
<evidence type="ECO:0000255" key="1">
    <source>
        <dbReference type="HAMAP-Rule" id="MF_01328"/>
    </source>
</evidence>
<evidence type="ECO:0000256" key="2">
    <source>
        <dbReference type="SAM" id="MobiDB-lite"/>
    </source>
</evidence>
<evidence type="ECO:0000305" key="3"/>
<sequence>MELVLKDAQSALTVSETTFGRDFNEALVHQVVVAYAAGARQGTRAQKTRAEVTGSGKKPWRQKGTGRARSGSIKSPIWRSGGVTFAARPQDHSQKVNKKMYRGALKSILSELVRQDRLIVVEKFSVEAPKTKLLAQKLKDMALEDVLIITGELDENLFLAARNLHKVDVRDATGIDPVSLIAFDKVVMTADAVKQVEEMLA</sequence>
<dbReference type="EMBL" id="CU928163">
    <property type="protein sequence ID" value="CAR14940.1"/>
    <property type="molecule type" value="Genomic_DNA"/>
</dbReference>
<dbReference type="RefSeq" id="WP_000424395.1">
    <property type="nucleotide sequence ID" value="NC_011751.1"/>
</dbReference>
<dbReference type="RefSeq" id="YP_002414445.1">
    <property type="nucleotide sequence ID" value="NC_011751.1"/>
</dbReference>
<dbReference type="SMR" id="B7NDU0"/>
<dbReference type="STRING" id="585056.ECUMN_3792"/>
<dbReference type="GeneID" id="97442859"/>
<dbReference type="KEGG" id="eum:ECUMN_3792"/>
<dbReference type="PATRIC" id="fig|585056.7.peg.3967"/>
<dbReference type="HOGENOM" id="CLU_041575_5_2_6"/>
<dbReference type="PRO" id="PR:B7NDU0"/>
<dbReference type="Proteomes" id="UP000007097">
    <property type="component" value="Chromosome"/>
</dbReference>
<dbReference type="GO" id="GO:1990904">
    <property type="term" value="C:ribonucleoprotein complex"/>
    <property type="evidence" value="ECO:0007669"/>
    <property type="project" value="UniProtKB-KW"/>
</dbReference>
<dbReference type="GO" id="GO:0005840">
    <property type="term" value="C:ribosome"/>
    <property type="evidence" value="ECO:0007669"/>
    <property type="project" value="UniProtKB-KW"/>
</dbReference>
<dbReference type="GO" id="GO:0019843">
    <property type="term" value="F:rRNA binding"/>
    <property type="evidence" value="ECO:0007669"/>
    <property type="project" value="UniProtKB-UniRule"/>
</dbReference>
<dbReference type="GO" id="GO:0003735">
    <property type="term" value="F:structural constituent of ribosome"/>
    <property type="evidence" value="ECO:0007669"/>
    <property type="project" value="InterPro"/>
</dbReference>
<dbReference type="GO" id="GO:0006412">
    <property type="term" value="P:translation"/>
    <property type="evidence" value="ECO:0007669"/>
    <property type="project" value="UniProtKB-UniRule"/>
</dbReference>
<dbReference type="FunFam" id="3.40.1370.10:FF:000001">
    <property type="entry name" value="50S ribosomal protein L4"/>
    <property type="match status" value="1"/>
</dbReference>
<dbReference type="Gene3D" id="3.40.1370.10">
    <property type="match status" value="1"/>
</dbReference>
<dbReference type="HAMAP" id="MF_01328_B">
    <property type="entry name" value="Ribosomal_uL4_B"/>
    <property type="match status" value="1"/>
</dbReference>
<dbReference type="InterPro" id="IPR002136">
    <property type="entry name" value="Ribosomal_uL4"/>
</dbReference>
<dbReference type="InterPro" id="IPR013005">
    <property type="entry name" value="Ribosomal_uL4-like"/>
</dbReference>
<dbReference type="InterPro" id="IPR023574">
    <property type="entry name" value="Ribosomal_uL4_dom_sf"/>
</dbReference>
<dbReference type="NCBIfam" id="TIGR03953">
    <property type="entry name" value="rplD_bact"/>
    <property type="match status" value="1"/>
</dbReference>
<dbReference type="PANTHER" id="PTHR10746">
    <property type="entry name" value="50S RIBOSOMAL PROTEIN L4"/>
    <property type="match status" value="1"/>
</dbReference>
<dbReference type="PANTHER" id="PTHR10746:SF6">
    <property type="entry name" value="LARGE RIBOSOMAL SUBUNIT PROTEIN UL4M"/>
    <property type="match status" value="1"/>
</dbReference>
<dbReference type="Pfam" id="PF00573">
    <property type="entry name" value="Ribosomal_L4"/>
    <property type="match status" value="1"/>
</dbReference>
<dbReference type="SUPFAM" id="SSF52166">
    <property type="entry name" value="Ribosomal protein L4"/>
    <property type="match status" value="1"/>
</dbReference>
<reference key="1">
    <citation type="journal article" date="2009" name="PLoS Genet.">
        <title>Organised genome dynamics in the Escherichia coli species results in highly diverse adaptive paths.</title>
        <authorList>
            <person name="Touchon M."/>
            <person name="Hoede C."/>
            <person name="Tenaillon O."/>
            <person name="Barbe V."/>
            <person name="Baeriswyl S."/>
            <person name="Bidet P."/>
            <person name="Bingen E."/>
            <person name="Bonacorsi S."/>
            <person name="Bouchier C."/>
            <person name="Bouvet O."/>
            <person name="Calteau A."/>
            <person name="Chiapello H."/>
            <person name="Clermont O."/>
            <person name="Cruveiller S."/>
            <person name="Danchin A."/>
            <person name="Diard M."/>
            <person name="Dossat C."/>
            <person name="Karoui M.E."/>
            <person name="Frapy E."/>
            <person name="Garry L."/>
            <person name="Ghigo J.M."/>
            <person name="Gilles A.M."/>
            <person name="Johnson J."/>
            <person name="Le Bouguenec C."/>
            <person name="Lescat M."/>
            <person name="Mangenot S."/>
            <person name="Martinez-Jehanne V."/>
            <person name="Matic I."/>
            <person name="Nassif X."/>
            <person name="Oztas S."/>
            <person name="Petit M.A."/>
            <person name="Pichon C."/>
            <person name="Rouy Z."/>
            <person name="Ruf C.S."/>
            <person name="Schneider D."/>
            <person name="Tourret J."/>
            <person name="Vacherie B."/>
            <person name="Vallenet D."/>
            <person name="Medigue C."/>
            <person name="Rocha E.P.C."/>
            <person name="Denamur E."/>
        </authorList>
    </citation>
    <scope>NUCLEOTIDE SEQUENCE [LARGE SCALE GENOMIC DNA]</scope>
    <source>
        <strain>UMN026 / ExPEC</strain>
    </source>
</reference>
<protein>
    <recommendedName>
        <fullName evidence="1">Large ribosomal subunit protein uL4</fullName>
    </recommendedName>
    <alternativeName>
        <fullName evidence="3">50S ribosomal protein L4</fullName>
    </alternativeName>
</protein>
<feature type="chain" id="PRO_1000142122" description="Large ribosomal subunit protein uL4">
    <location>
        <begin position="1"/>
        <end position="201"/>
    </location>
</feature>
<feature type="region of interest" description="Disordered" evidence="2">
    <location>
        <begin position="44"/>
        <end position="71"/>
    </location>
</feature>